<dbReference type="EMBL" id="BA000011">
    <property type="protein sequence ID" value="BAB59433.1"/>
    <property type="molecule type" value="Genomic_DNA"/>
</dbReference>
<dbReference type="RefSeq" id="WP_010916546.1">
    <property type="nucleotide sequence ID" value="NC_002689.2"/>
</dbReference>
<dbReference type="SMR" id="Q97C14"/>
<dbReference type="STRING" id="273116.gene:9381065"/>
<dbReference type="PaxDb" id="273116-14324506"/>
<dbReference type="GeneID" id="1440804"/>
<dbReference type="KEGG" id="tvo:TVG0303364"/>
<dbReference type="eggNOG" id="arCOG01303">
    <property type="taxonomic scope" value="Archaea"/>
</dbReference>
<dbReference type="HOGENOM" id="CLU_097408_2_2_2"/>
<dbReference type="OrthoDB" id="9810at2157"/>
<dbReference type="PhylomeDB" id="Q97C14"/>
<dbReference type="Proteomes" id="UP000001017">
    <property type="component" value="Chromosome"/>
</dbReference>
<dbReference type="GO" id="GO:0005829">
    <property type="term" value="C:cytosol"/>
    <property type="evidence" value="ECO:0007669"/>
    <property type="project" value="TreeGrafter"/>
</dbReference>
<dbReference type="GO" id="GO:0005960">
    <property type="term" value="C:glycine cleavage complex"/>
    <property type="evidence" value="ECO:0007669"/>
    <property type="project" value="InterPro"/>
</dbReference>
<dbReference type="GO" id="GO:0019464">
    <property type="term" value="P:glycine decarboxylation via glycine cleavage system"/>
    <property type="evidence" value="ECO:0007669"/>
    <property type="project" value="UniProtKB-UniRule"/>
</dbReference>
<dbReference type="CDD" id="cd06848">
    <property type="entry name" value="GCS_H"/>
    <property type="match status" value="1"/>
</dbReference>
<dbReference type="Gene3D" id="2.40.50.100">
    <property type="match status" value="1"/>
</dbReference>
<dbReference type="HAMAP" id="MF_00272">
    <property type="entry name" value="GcvH"/>
    <property type="match status" value="1"/>
</dbReference>
<dbReference type="InterPro" id="IPR000089">
    <property type="entry name" value="Biotin_lipoyl"/>
</dbReference>
<dbReference type="InterPro" id="IPR002930">
    <property type="entry name" value="GCV_H"/>
</dbReference>
<dbReference type="InterPro" id="IPR033753">
    <property type="entry name" value="GCV_H/Fam206"/>
</dbReference>
<dbReference type="InterPro" id="IPR017453">
    <property type="entry name" value="GCV_H_sub"/>
</dbReference>
<dbReference type="InterPro" id="IPR011053">
    <property type="entry name" value="Single_hybrid_motif"/>
</dbReference>
<dbReference type="NCBIfam" id="TIGR00527">
    <property type="entry name" value="gcvH"/>
    <property type="match status" value="1"/>
</dbReference>
<dbReference type="NCBIfam" id="NF002270">
    <property type="entry name" value="PRK01202.1"/>
    <property type="match status" value="1"/>
</dbReference>
<dbReference type="PANTHER" id="PTHR11715">
    <property type="entry name" value="GLYCINE CLEAVAGE SYSTEM H PROTEIN"/>
    <property type="match status" value="1"/>
</dbReference>
<dbReference type="PANTHER" id="PTHR11715:SF3">
    <property type="entry name" value="GLYCINE CLEAVAGE SYSTEM H PROTEIN-RELATED"/>
    <property type="match status" value="1"/>
</dbReference>
<dbReference type="Pfam" id="PF01597">
    <property type="entry name" value="GCV_H"/>
    <property type="match status" value="1"/>
</dbReference>
<dbReference type="SUPFAM" id="SSF51230">
    <property type="entry name" value="Single hybrid motif"/>
    <property type="match status" value="1"/>
</dbReference>
<dbReference type="PROSITE" id="PS50968">
    <property type="entry name" value="BIOTINYL_LIPOYL"/>
    <property type="match status" value="1"/>
</dbReference>
<reference key="1">
    <citation type="journal article" date="2000" name="Proc. Natl. Acad. Sci. U.S.A.">
        <title>Archaeal adaptation to higher temperatures revealed by genomic sequence of Thermoplasma volcanium.</title>
        <authorList>
            <person name="Kawashima T."/>
            <person name="Amano N."/>
            <person name="Koike H."/>
            <person name="Makino S."/>
            <person name="Higuchi S."/>
            <person name="Kawashima-Ohya Y."/>
            <person name="Watanabe K."/>
            <person name="Yamazaki M."/>
            <person name="Kanehori K."/>
            <person name="Kawamoto T."/>
            <person name="Nunoshiba T."/>
            <person name="Yamamoto Y."/>
            <person name="Aramaki H."/>
            <person name="Makino K."/>
            <person name="Suzuki M."/>
        </authorList>
    </citation>
    <scope>NUCLEOTIDE SEQUENCE [LARGE SCALE GENOMIC DNA]</scope>
    <source>
        <strain>ATCC 51530 / DSM 4299 / JCM 9571 / NBRC 15438 / GSS1</strain>
    </source>
</reference>
<name>GCSH_THEVO</name>
<proteinExistence type="inferred from homology"/>
<sequence>MTNVPDGLKYTKTHEWYKVDNGIATVGITDYAQSQMTDIVYVDLPEVGDKKKVGDVLLTIESVKSAEDVYSPLTGEITEVNQELTKHPENINKDPYGNWLVKMKVEKEGEYLTAEQYRKLIQ</sequence>
<accession>Q97C14</accession>
<protein>
    <recommendedName>
        <fullName evidence="1">Probable glycine cleavage system H protein</fullName>
    </recommendedName>
</protein>
<organism>
    <name type="scientific">Thermoplasma volcanium (strain ATCC 51530 / DSM 4299 / JCM 9571 / NBRC 15438 / GSS1)</name>
    <dbReference type="NCBI Taxonomy" id="273116"/>
    <lineage>
        <taxon>Archaea</taxon>
        <taxon>Methanobacteriati</taxon>
        <taxon>Thermoplasmatota</taxon>
        <taxon>Thermoplasmata</taxon>
        <taxon>Thermoplasmatales</taxon>
        <taxon>Thermoplasmataceae</taxon>
        <taxon>Thermoplasma</taxon>
    </lineage>
</organism>
<gene>
    <name evidence="1" type="primary">gcvH</name>
    <name type="ordered locus">TV0291</name>
    <name type="ORF">TVG0303364</name>
</gene>
<evidence type="ECO:0000255" key="1">
    <source>
        <dbReference type="HAMAP-Rule" id="MF_00272"/>
    </source>
</evidence>
<evidence type="ECO:0000255" key="2">
    <source>
        <dbReference type="PROSITE-ProRule" id="PRU01066"/>
    </source>
</evidence>
<feature type="chain" id="PRO_0000166289" description="Probable glycine cleavage system H protein">
    <location>
        <begin position="1"/>
        <end position="122"/>
    </location>
</feature>
<feature type="domain" description="Lipoyl-binding" evidence="2">
    <location>
        <begin position="23"/>
        <end position="104"/>
    </location>
</feature>
<feature type="modified residue" description="N6-lipoyllysine" evidence="1">
    <location>
        <position position="64"/>
    </location>
</feature>
<comment type="function">
    <text evidence="1">The glycine cleavage system catalyzes the degradation of glycine. The H protein shuttles the methylamine group of glycine from the P protein to the T protein.</text>
</comment>
<comment type="cofactor">
    <cofactor evidence="1">
        <name>(R)-lipoate</name>
        <dbReference type="ChEBI" id="CHEBI:83088"/>
    </cofactor>
    <text evidence="1">Binds 1 lipoyl cofactor covalently.</text>
</comment>
<comment type="subunit">
    <text evidence="1">The glycine cleavage system is composed of four proteins: P, T, L and H.</text>
</comment>
<comment type="similarity">
    <text evidence="1">Belongs to the GcvH family.</text>
</comment>
<keyword id="KW-0450">Lipoyl</keyword>